<reference key="1">
    <citation type="journal article" date="2009" name="Stand. Genomic Sci.">
        <title>Complete genome sequence of Methanoculleus marisnigri Romesser et al. 1981 type strain JR1.</title>
        <authorList>
            <person name="Anderson I.J."/>
            <person name="Sieprawska-Lupa M."/>
            <person name="Lapidus A."/>
            <person name="Nolan M."/>
            <person name="Copeland A."/>
            <person name="Glavina Del Rio T."/>
            <person name="Tice H."/>
            <person name="Dalin E."/>
            <person name="Barry K."/>
            <person name="Saunders E."/>
            <person name="Han C."/>
            <person name="Brettin T."/>
            <person name="Detter J.C."/>
            <person name="Bruce D."/>
            <person name="Mikhailova N."/>
            <person name="Pitluck S."/>
            <person name="Hauser L."/>
            <person name="Land M."/>
            <person name="Lucas S."/>
            <person name="Richardson P."/>
            <person name="Whitman W.B."/>
            <person name="Kyrpides N.C."/>
        </authorList>
    </citation>
    <scope>NUCLEOTIDE SEQUENCE [LARGE SCALE GENOMIC DNA]</scope>
    <source>
        <strain>ATCC 35101 / DSM 1498 / JR1</strain>
    </source>
</reference>
<evidence type="ECO:0000255" key="1">
    <source>
        <dbReference type="HAMAP-Rule" id="MF_00284"/>
    </source>
</evidence>
<name>SYFB_METMJ</name>
<comment type="catalytic activity">
    <reaction evidence="1">
        <text>tRNA(Phe) + L-phenylalanine + ATP = L-phenylalanyl-tRNA(Phe) + AMP + diphosphate + H(+)</text>
        <dbReference type="Rhea" id="RHEA:19413"/>
        <dbReference type="Rhea" id="RHEA-COMP:9668"/>
        <dbReference type="Rhea" id="RHEA-COMP:9699"/>
        <dbReference type="ChEBI" id="CHEBI:15378"/>
        <dbReference type="ChEBI" id="CHEBI:30616"/>
        <dbReference type="ChEBI" id="CHEBI:33019"/>
        <dbReference type="ChEBI" id="CHEBI:58095"/>
        <dbReference type="ChEBI" id="CHEBI:78442"/>
        <dbReference type="ChEBI" id="CHEBI:78531"/>
        <dbReference type="ChEBI" id="CHEBI:456215"/>
        <dbReference type="EC" id="6.1.1.20"/>
    </reaction>
</comment>
<comment type="cofactor">
    <cofactor evidence="1">
        <name>Mg(2+)</name>
        <dbReference type="ChEBI" id="CHEBI:18420"/>
    </cofactor>
</comment>
<comment type="subunit">
    <text evidence="1">Tetramer of two alpha and two beta subunits.</text>
</comment>
<comment type="subcellular location">
    <subcellularLocation>
        <location evidence="1">Cytoplasm</location>
    </subcellularLocation>
</comment>
<comment type="similarity">
    <text evidence="1">Belongs to the phenylalanyl-tRNA synthetase beta subunit family. Type 2 subfamily.</text>
</comment>
<sequence length="546" mass="59768">MAIITLPYRYLERLAGTDRQTIIDRVPMIGADIERIEDDHVDVEFFPNRPDLYSPEGVARAMRGFLGIEEGLPAYTVRPSGIAFSVDPGLADIRPFLGSAVIRNVNLDEEAIESLMALQEALHWAVGRGRGKVAIGVHDLDTVTPPFRYIASPRNRSFVPLDFEREMTMEEMLADHPKGRDYAHLVENFDTFPLIVDAENRVLSFPPIINGELTRVTAATKNILLDCTGTDRRAVMTAVNIICTALIEAGATVETVTVEGEEMPTLAPAERVVSVAECSRLLGLSLTPQEMAGLLRRMRFDAEPDGDSRVRILVPCYRSDILHDWDIFEDVAIAYGIENFDAALPATSTVAQEHPIPAVAGAVRSVMTGLGYLEAIPFTLTNERVLYANMQREPAPGTLRLLHPISEEQTVVRTDLLPLLMEMLLANKHRELPQRLFAVGDVVEDCVTYLKVAAVSIHPAADFSEAYAAADVLCRELSLSYTVVESADPAFLDGRRGDIVVDGKIVGVFGEIHPAVLGAFDLEHPVAALALDLTAVPGYPALPDTP</sequence>
<proteinExistence type="inferred from homology"/>
<keyword id="KW-0030">Aminoacyl-tRNA synthetase</keyword>
<keyword id="KW-0067">ATP-binding</keyword>
<keyword id="KW-0963">Cytoplasm</keyword>
<keyword id="KW-0436">Ligase</keyword>
<keyword id="KW-0460">Magnesium</keyword>
<keyword id="KW-0479">Metal-binding</keyword>
<keyword id="KW-0547">Nucleotide-binding</keyword>
<keyword id="KW-0648">Protein biosynthesis</keyword>
<dbReference type="EC" id="6.1.1.20" evidence="1"/>
<dbReference type="EMBL" id="CP000562">
    <property type="protein sequence ID" value="ABN56577.1"/>
    <property type="molecule type" value="Genomic_DNA"/>
</dbReference>
<dbReference type="RefSeq" id="WP_011843488.1">
    <property type="nucleotide sequence ID" value="NC_009051.1"/>
</dbReference>
<dbReference type="SMR" id="A3CT77"/>
<dbReference type="STRING" id="368407.Memar_0644"/>
<dbReference type="GeneID" id="4847631"/>
<dbReference type="GeneID" id="76731214"/>
<dbReference type="KEGG" id="mem:Memar_0644"/>
<dbReference type="eggNOG" id="arCOG00412">
    <property type="taxonomic scope" value="Archaea"/>
</dbReference>
<dbReference type="HOGENOM" id="CLU_020279_3_0_2"/>
<dbReference type="OrthoDB" id="10073at2157"/>
<dbReference type="Proteomes" id="UP000002146">
    <property type="component" value="Chromosome"/>
</dbReference>
<dbReference type="GO" id="GO:0009328">
    <property type="term" value="C:phenylalanine-tRNA ligase complex"/>
    <property type="evidence" value="ECO:0007669"/>
    <property type="project" value="TreeGrafter"/>
</dbReference>
<dbReference type="GO" id="GO:0005524">
    <property type="term" value="F:ATP binding"/>
    <property type="evidence" value="ECO:0007669"/>
    <property type="project" value="UniProtKB-UniRule"/>
</dbReference>
<dbReference type="GO" id="GO:0000287">
    <property type="term" value="F:magnesium ion binding"/>
    <property type="evidence" value="ECO:0007669"/>
    <property type="project" value="InterPro"/>
</dbReference>
<dbReference type="GO" id="GO:0004826">
    <property type="term" value="F:phenylalanine-tRNA ligase activity"/>
    <property type="evidence" value="ECO:0007669"/>
    <property type="project" value="UniProtKB-UniRule"/>
</dbReference>
<dbReference type="GO" id="GO:0003723">
    <property type="term" value="F:RNA binding"/>
    <property type="evidence" value="ECO:0007669"/>
    <property type="project" value="InterPro"/>
</dbReference>
<dbReference type="GO" id="GO:0006432">
    <property type="term" value="P:phenylalanyl-tRNA aminoacylation"/>
    <property type="evidence" value="ECO:0007669"/>
    <property type="project" value="UniProtKB-UniRule"/>
</dbReference>
<dbReference type="FunFam" id="3.50.40.10:FF:000003">
    <property type="entry name" value="Phenylalanine--tRNA ligase beta subunit"/>
    <property type="match status" value="1"/>
</dbReference>
<dbReference type="Gene3D" id="3.30.56.10">
    <property type="match status" value="2"/>
</dbReference>
<dbReference type="Gene3D" id="3.30.930.10">
    <property type="entry name" value="Bira Bifunctional Protein, Domain 2"/>
    <property type="match status" value="1"/>
</dbReference>
<dbReference type="Gene3D" id="3.50.40.10">
    <property type="entry name" value="Phenylalanyl-trna Synthetase, Chain B, domain 3"/>
    <property type="match status" value="1"/>
</dbReference>
<dbReference type="HAMAP" id="MF_00284">
    <property type="entry name" value="Phe_tRNA_synth_beta2"/>
    <property type="match status" value="1"/>
</dbReference>
<dbReference type="InterPro" id="IPR045864">
    <property type="entry name" value="aa-tRNA-synth_II/BPL/LPL"/>
</dbReference>
<dbReference type="InterPro" id="IPR005146">
    <property type="entry name" value="B3/B4_tRNA-bd"/>
</dbReference>
<dbReference type="InterPro" id="IPR009061">
    <property type="entry name" value="DNA-bd_dom_put_sf"/>
</dbReference>
<dbReference type="InterPro" id="IPR045060">
    <property type="entry name" value="Phe-tRNA-ligase_IIc_bsu"/>
</dbReference>
<dbReference type="InterPro" id="IPR004531">
    <property type="entry name" value="Phe-tRNA-synth_IIc_bsu_arc_euk"/>
</dbReference>
<dbReference type="InterPro" id="IPR020825">
    <property type="entry name" value="Phe-tRNA_synthase-like_B3/B4"/>
</dbReference>
<dbReference type="InterPro" id="IPR022918">
    <property type="entry name" value="Phe_tRNA_ligase_beta2_arc"/>
</dbReference>
<dbReference type="InterPro" id="IPR041616">
    <property type="entry name" value="PheRS_beta_core"/>
</dbReference>
<dbReference type="InterPro" id="IPR005147">
    <property type="entry name" value="tRNA_synthase_B5-dom"/>
</dbReference>
<dbReference type="NCBIfam" id="TIGR00471">
    <property type="entry name" value="pheT_arch"/>
    <property type="match status" value="1"/>
</dbReference>
<dbReference type="PANTHER" id="PTHR10947:SF0">
    <property type="entry name" value="PHENYLALANINE--TRNA LIGASE BETA SUBUNIT"/>
    <property type="match status" value="1"/>
</dbReference>
<dbReference type="PANTHER" id="PTHR10947">
    <property type="entry name" value="PHENYLALANYL-TRNA SYNTHETASE BETA CHAIN AND LEUCINE-RICH REPEAT-CONTAINING PROTEIN 47"/>
    <property type="match status" value="1"/>
</dbReference>
<dbReference type="Pfam" id="PF03483">
    <property type="entry name" value="B3_4"/>
    <property type="match status" value="1"/>
</dbReference>
<dbReference type="Pfam" id="PF03484">
    <property type="entry name" value="B5"/>
    <property type="match status" value="1"/>
</dbReference>
<dbReference type="Pfam" id="PF17759">
    <property type="entry name" value="tRNA_synthFbeta"/>
    <property type="match status" value="1"/>
</dbReference>
<dbReference type="SMART" id="SM00873">
    <property type="entry name" value="B3_4"/>
    <property type="match status" value="1"/>
</dbReference>
<dbReference type="SMART" id="SM00874">
    <property type="entry name" value="B5"/>
    <property type="match status" value="1"/>
</dbReference>
<dbReference type="SUPFAM" id="SSF55681">
    <property type="entry name" value="Class II aaRS and biotin synthetases"/>
    <property type="match status" value="1"/>
</dbReference>
<dbReference type="SUPFAM" id="SSF56037">
    <property type="entry name" value="PheT/TilS domain"/>
    <property type="match status" value="1"/>
</dbReference>
<dbReference type="SUPFAM" id="SSF46955">
    <property type="entry name" value="Putative DNA-binding domain"/>
    <property type="match status" value="2"/>
</dbReference>
<dbReference type="PROSITE" id="PS51483">
    <property type="entry name" value="B5"/>
    <property type="match status" value="1"/>
</dbReference>
<protein>
    <recommendedName>
        <fullName evidence="1">Phenylalanine--tRNA ligase beta subunit</fullName>
        <ecNumber evidence="1">6.1.1.20</ecNumber>
    </recommendedName>
    <alternativeName>
        <fullName evidence="1">Phenylalanyl-tRNA synthetase beta subunit</fullName>
        <shortName evidence="1">PheRS</shortName>
    </alternativeName>
</protein>
<gene>
    <name evidence="1" type="primary">pheT</name>
    <name type="ordered locus">Memar_0644</name>
</gene>
<organism>
    <name type="scientific">Methanoculleus marisnigri (strain ATCC 35101 / DSM 1498 / JR1)</name>
    <dbReference type="NCBI Taxonomy" id="368407"/>
    <lineage>
        <taxon>Archaea</taxon>
        <taxon>Methanobacteriati</taxon>
        <taxon>Methanobacteriota</taxon>
        <taxon>Stenosarchaea group</taxon>
        <taxon>Methanomicrobia</taxon>
        <taxon>Methanomicrobiales</taxon>
        <taxon>Methanomicrobiaceae</taxon>
        <taxon>Methanoculleus</taxon>
    </lineage>
</organism>
<accession>A3CT77</accession>
<feature type="chain" id="PRO_1000022424" description="Phenylalanine--tRNA ligase beta subunit">
    <location>
        <begin position="1"/>
        <end position="546"/>
    </location>
</feature>
<feature type="domain" description="B5" evidence="1">
    <location>
        <begin position="266"/>
        <end position="342"/>
    </location>
</feature>
<feature type="binding site" evidence="1">
    <location>
        <position position="320"/>
    </location>
    <ligand>
        <name>Mg(2+)</name>
        <dbReference type="ChEBI" id="CHEBI:18420"/>
        <note>shared with alpha subunit</note>
    </ligand>
</feature>
<feature type="binding site" evidence="1">
    <location>
        <position position="326"/>
    </location>
    <ligand>
        <name>Mg(2+)</name>
        <dbReference type="ChEBI" id="CHEBI:18420"/>
        <note>shared with alpha subunit</note>
    </ligand>
</feature>
<feature type="binding site" evidence="1">
    <location>
        <position position="329"/>
    </location>
    <ligand>
        <name>Mg(2+)</name>
        <dbReference type="ChEBI" id="CHEBI:18420"/>
        <note>shared with alpha subunit</note>
    </ligand>
</feature>
<feature type="binding site" evidence="1">
    <location>
        <position position="330"/>
    </location>
    <ligand>
        <name>Mg(2+)</name>
        <dbReference type="ChEBI" id="CHEBI:18420"/>
        <note>shared with alpha subunit</note>
    </ligand>
</feature>